<proteinExistence type="inferred from homology"/>
<dbReference type="EMBL" id="CP001157">
    <property type="protein sequence ID" value="ACO80297.1"/>
    <property type="molecule type" value="Genomic_DNA"/>
</dbReference>
<dbReference type="RefSeq" id="WP_012702669.1">
    <property type="nucleotide sequence ID" value="NC_012560.1"/>
</dbReference>
<dbReference type="SMR" id="C1DEW8"/>
<dbReference type="STRING" id="322710.Avin_41670"/>
<dbReference type="EnsemblBacteria" id="ACO80297">
    <property type="protein sequence ID" value="ACO80297"/>
    <property type="gene ID" value="Avin_41670"/>
</dbReference>
<dbReference type="GeneID" id="88187096"/>
<dbReference type="KEGG" id="avn:Avin_41670"/>
<dbReference type="eggNOG" id="COG1235">
    <property type="taxonomic scope" value="Bacteria"/>
</dbReference>
<dbReference type="HOGENOM" id="CLU_061120_0_0_6"/>
<dbReference type="OrthoDB" id="9778305at2"/>
<dbReference type="UniPathway" id="UPA00539"/>
<dbReference type="Proteomes" id="UP000002424">
    <property type="component" value="Chromosome"/>
</dbReference>
<dbReference type="GO" id="GO:0018189">
    <property type="term" value="P:pyrroloquinoline quinone biosynthetic process"/>
    <property type="evidence" value="ECO:0007669"/>
    <property type="project" value="UniProtKB-UniRule"/>
</dbReference>
<dbReference type="CDD" id="cd16274">
    <property type="entry name" value="PQQB-like_MBL-fold"/>
    <property type="match status" value="1"/>
</dbReference>
<dbReference type="Gene3D" id="3.60.15.10">
    <property type="entry name" value="Ribonuclease Z/Hydroxyacylglutathione hydrolase-like"/>
    <property type="match status" value="1"/>
</dbReference>
<dbReference type="HAMAP" id="MF_00653">
    <property type="entry name" value="PQQ_syn_PqqB"/>
    <property type="match status" value="1"/>
</dbReference>
<dbReference type="InterPro" id="IPR001279">
    <property type="entry name" value="Metallo-B-lactamas"/>
</dbReference>
<dbReference type="InterPro" id="IPR011842">
    <property type="entry name" value="PQQ_synth_PqqB"/>
</dbReference>
<dbReference type="InterPro" id="IPR036866">
    <property type="entry name" value="RibonucZ/Hydroxyglut_hydro"/>
</dbReference>
<dbReference type="NCBIfam" id="TIGR02108">
    <property type="entry name" value="PQQ_syn_pqqB"/>
    <property type="match status" value="1"/>
</dbReference>
<dbReference type="PANTHER" id="PTHR42663:SF7">
    <property type="entry name" value="COENZYME PQQ SYNTHESIS PROTEIN B"/>
    <property type="match status" value="1"/>
</dbReference>
<dbReference type="PANTHER" id="PTHR42663">
    <property type="entry name" value="HYDROLASE C777.06C-RELATED-RELATED"/>
    <property type="match status" value="1"/>
</dbReference>
<dbReference type="Pfam" id="PF12706">
    <property type="entry name" value="Lactamase_B_2"/>
    <property type="match status" value="1"/>
</dbReference>
<dbReference type="SUPFAM" id="SSF56281">
    <property type="entry name" value="Metallo-hydrolase/oxidoreductase"/>
    <property type="match status" value="1"/>
</dbReference>
<evidence type="ECO:0000255" key="1">
    <source>
        <dbReference type="HAMAP-Rule" id="MF_00653"/>
    </source>
</evidence>
<feature type="chain" id="PRO_1000212435" description="Coenzyme PQQ synthesis protein B">
    <location>
        <begin position="1"/>
        <end position="302"/>
    </location>
</feature>
<accession>C1DEW8</accession>
<gene>
    <name evidence="1" type="primary">pqqB</name>
    <name type="ordered locus">Avin_41670</name>
</gene>
<keyword id="KW-0884">PQQ biosynthesis</keyword>
<keyword id="KW-0813">Transport</keyword>
<reference key="1">
    <citation type="journal article" date="2009" name="J. Bacteriol.">
        <title>Genome sequence of Azotobacter vinelandii, an obligate aerobe specialized to support diverse anaerobic metabolic processes.</title>
        <authorList>
            <person name="Setubal J.C."/>
            <person name="Dos Santos P."/>
            <person name="Goldman B.S."/>
            <person name="Ertesvaag H."/>
            <person name="Espin G."/>
            <person name="Rubio L.M."/>
            <person name="Valla S."/>
            <person name="Almeida N.F."/>
            <person name="Balasubramanian D."/>
            <person name="Cromes L."/>
            <person name="Curatti L."/>
            <person name="Du Z."/>
            <person name="Godsy E."/>
            <person name="Goodner B."/>
            <person name="Hellner-Burris K."/>
            <person name="Hernandez J.A."/>
            <person name="Houmiel K."/>
            <person name="Imperial J."/>
            <person name="Kennedy C."/>
            <person name="Larson T.J."/>
            <person name="Latreille P."/>
            <person name="Ligon L.S."/>
            <person name="Lu J."/>
            <person name="Maerk M."/>
            <person name="Miller N.M."/>
            <person name="Norton S."/>
            <person name="O'Carroll I.P."/>
            <person name="Paulsen I."/>
            <person name="Raulfs E.C."/>
            <person name="Roemer R."/>
            <person name="Rosser J."/>
            <person name="Segura D."/>
            <person name="Slater S."/>
            <person name="Stricklin S.L."/>
            <person name="Studholme D.J."/>
            <person name="Sun J."/>
            <person name="Viana C.J."/>
            <person name="Wallin E."/>
            <person name="Wang B."/>
            <person name="Wheeler C."/>
            <person name="Zhu H."/>
            <person name="Dean D.R."/>
            <person name="Dixon R."/>
            <person name="Wood D."/>
        </authorList>
    </citation>
    <scope>NUCLEOTIDE SEQUENCE [LARGE SCALE GENOMIC DNA]</scope>
    <source>
        <strain>DJ / ATCC BAA-1303</strain>
    </source>
</reference>
<protein>
    <recommendedName>
        <fullName evidence="1">Coenzyme PQQ synthesis protein B</fullName>
    </recommendedName>
    <alternativeName>
        <fullName evidence="1">Pyrroloquinoline quinone biosynthesis protein B</fullName>
    </alternativeName>
</protein>
<organism>
    <name type="scientific">Azotobacter vinelandii (strain DJ / ATCC BAA-1303)</name>
    <dbReference type="NCBI Taxonomy" id="322710"/>
    <lineage>
        <taxon>Bacteria</taxon>
        <taxon>Pseudomonadati</taxon>
        <taxon>Pseudomonadota</taxon>
        <taxon>Gammaproteobacteria</taxon>
        <taxon>Pseudomonadales</taxon>
        <taxon>Pseudomonadaceae</taxon>
        <taxon>Azotobacter</taxon>
    </lineage>
</organism>
<comment type="function">
    <text evidence="1">May be involved in the transport of PQQ or its precursor to the periplasm.</text>
</comment>
<comment type="pathway">
    <text evidence="1">Cofactor biosynthesis; pyrroloquinoline quinone biosynthesis.</text>
</comment>
<comment type="similarity">
    <text evidence="1">Belongs to the PqqB family.</text>
</comment>
<sequence>MHIRILGSAAGGGFPQWNCNCRNCHGLRQGTLRATPRSQSSIALSDDGANWILCNASPDIRAQIEAFPALQPARAVRDTAIRALILLDSQIDHCTGLLGLREGCPHEVWCTEMVHQDLTTGFPLFAMLEHWNGGLHWKPIVLERSFAVDACPALRFTPIPLRSAAPPYSPHRHDPHPGDNLGLLVEDSRTGGTLFYAPGLGRVDAPLRERMRRADCLLVDGTLWRDDEMIHAGCGSKLGSEMGHLPQSGAGGMLEVLDGLDGRKVLIHINNTNPILDEDSPERAQLVARGIEVARDGMDIDL</sequence>
<name>PQQB_AZOVD</name>